<gene>
    <name type="primary">IDI1</name>
</gene>
<name>IDI1_PONAB</name>
<organism>
    <name type="scientific">Pongo abelii</name>
    <name type="common">Sumatran orangutan</name>
    <name type="synonym">Pongo pygmaeus abelii</name>
    <dbReference type="NCBI Taxonomy" id="9601"/>
    <lineage>
        <taxon>Eukaryota</taxon>
        <taxon>Metazoa</taxon>
        <taxon>Chordata</taxon>
        <taxon>Craniata</taxon>
        <taxon>Vertebrata</taxon>
        <taxon>Euteleostomi</taxon>
        <taxon>Mammalia</taxon>
        <taxon>Eutheria</taxon>
        <taxon>Euarchontoglires</taxon>
        <taxon>Primates</taxon>
        <taxon>Haplorrhini</taxon>
        <taxon>Catarrhini</taxon>
        <taxon>Hominidae</taxon>
        <taxon>Pongo</taxon>
    </lineage>
</organism>
<sequence length="227" mass="26339">MPEINTDHLDKQQVQLLAEMCILIDENDNKIGAETKKNCHLNENIEKGLLHRAFSVFLFNTENKLLLQQRSDAKITLPGCFTNTCCSHPLSNPGELEENDALGVRRAAQRRLKAELGIPLEEVPPEEINYLTRIHYKAQSDGIWGEHEIDYILLVRKNVTLNPDPNEIKSYCYVSKEELKELLKKAASGEIKITPWFKIIAETFLFKWWDNLNHLNQFVDHEKIYRI</sequence>
<feature type="chain" id="PRO_0000205226" description="Isopentenyl-diphosphate Delta-isomerase 1">
    <location>
        <begin position="1"/>
        <end position="227"/>
    </location>
</feature>
<feature type="domain" description="Nudix hydrolase" evidence="4">
    <location>
        <begin position="49"/>
        <end position="199"/>
    </location>
</feature>
<feature type="short sequence motif" description="Microbody targeting signal">
    <location>
        <begin position="225"/>
        <end position="227"/>
    </location>
</feature>
<feature type="active site" evidence="1">
    <location>
        <position position="86"/>
    </location>
</feature>
<feature type="active site" evidence="1">
    <location>
        <position position="148"/>
    </location>
</feature>
<feature type="binding site" evidence="1">
    <location>
        <position position="36"/>
    </location>
    <ligand>
        <name>substrate</name>
    </ligand>
</feature>
<feature type="binding site" evidence="1">
    <location>
        <position position="40"/>
    </location>
    <ligand>
        <name>Mg(2+)</name>
        <dbReference type="ChEBI" id="CHEBI:18420"/>
    </ligand>
</feature>
<feature type="binding site" evidence="1">
    <location>
        <position position="51"/>
    </location>
    <ligand>
        <name>Mg(2+)</name>
        <dbReference type="ChEBI" id="CHEBI:18420"/>
    </ligand>
</feature>
<feature type="binding site" evidence="1">
    <location>
        <position position="70"/>
    </location>
    <ligand>
        <name>substrate</name>
    </ligand>
</feature>
<feature type="binding site" evidence="1">
    <location>
        <position position="74"/>
    </location>
    <ligand>
        <name>substrate</name>
    </ligand>
</feature>
<feature type="binding site" evidence="1">
    <location>
        <position position="87"/>
    </location>
    <ligand>
        <name>substrate</name>
    </ligand>
</feature>
<feature type="binding site" evidence="1">
    <location>
        <position position="146"/>
    </location>
    <ligand>
        <name>Mg(2+)</name>
        <dbReference type="ChEBI" id="CHEBI:18420"/>
    </ligand>
</feature>
<feature type="binding site" evidence="1">
    <location>
        <position position="148"/>
    </location>
    <ligand>
        <name>Mg(2+)</name>
        <dbReference type="ChEBI" id="CHEBI:18420"/>
    </ligand>
</feature>
<feature type="modified residue" description="N6-acetyllysine" evidence="3">
    <location>
        <position position="176"/>
    </location>
</feature>
<reference key="1">
    <citation type="submission" date="2004-11" db="EMBL/GenBank/DDBJ databases">
        <authorList>
            <consortium name="The German cDNA consortium"/>
        </authorList>
    </citation>
    <scope>NUCLEOTIDE SEQUENCE [LARGE SCALE MRNA]</scope>
    <source>
        <tissue>Brain cortex</tissue>
    </source>
</reference>
<dbReference type="EC" id="5.3.3.2" evidence="3"/>
<dbReference type="EMBL" id="CR859685">
    <property type="protein sequence ID" value="CAH91844.1"/>
    <property type="status" value="ALT_INIT"/>
    <property type="molecule type" value="mRNA"/>
</dbReference>
<dbReference type="RefSeq" id="NP_001126068.1">
    <property type="nucleotide sequence ID" value="NM_001132596.1"/>
</dbReference>
<dbReference type="SMR" id="Q5R8R6"/>
<dbReference type="FunCoup" id="Q5R8R6">
    <property type="interactions" value="2184"/>
</dbReference>
<dbReference type="STRING" id="9601.ENSPPYP00000002358"/>
<dbReference type="GeneID" id="100173020"/>
<dbReference type="KEGG" id="pon:100173020"/>
<dbReference type="CTD" id="3422"/>
<dbReference type="eggNOG" id="KOG0142">
    <property type="taxonomic scope" value="Eukaryota"/>
</dbReference>
<dbReference type="InParanoid" id="Q5R8R6"/>
<dbReference type="OrthoDB" id="510307at2759"/>
<dbReference type="UniPathway" id="UPA00059">
    <property type="reaction ID" value="UER00104"/>
</dbReference>
<dbReference type="Proteomes" id="UP000001595">
    <property type="component" value="Unplaced"/>
</dbReference>
<dbReference type="GO" id="GO:0005777">
    <property type="term" value="C:peroxisome"/>
    <property type="evidence" value="ECO:0007669"/>
    <property type="project" value="UniProtKB-SubCell"/>
</dbReference>
<dbReference type="GO" id="GO:0004452">
    <property type="term" value="F:isopentenyl-diphosphate delta-isomerase activity"/>
    <property type="evidence" value="ECO:0007669"/>
    <property type="project" value="UniProtKB-EC"/>
</dbReference>
<dbReference type="GO" id="GO:0046872">
    <property type="term" value="F:metal ion binding"/>
    <property type="evidence" value="ECO:0007669"/>
    <property type="project" value="UniProtKB-KW"/>
</dbReference>
<dbReference type="GO" id="GO:0006695">
    <property type="term" value="P:cholesterol biosynthetic process"/>
    <property type="evidence" value="ECO:0007669"/>
    <property type="project" value="UniProtKB-KW"/>
</dbReference>
<dbReference type="GO" id="GO:0050992">
    <property type="term" value="P:dimethylallyl diphosphate biosynthetic process"/>
    <property type="evidence" value="ECO:0007669"/>
    <property type="project" value="UniProtKB-UniPathway"/>
</dbReference>
<dbReference type="GO" id="GO:0009240">
    <property type="term" value="P:isopentenyl diphosphate biosynthetic process"/>
    <property type="evidence" value="ECO:0007669"/>
    <property type="project" value="TreeGrafter"/>
</dbReference>
<dbReference type="CDD" id="cd02885">
    <property type="entry name" value="NUDIX_IPP_Isomerase"/>
    <property type="match status" value="1"/>
</dbReference>
<dbReference type="FunFam" id="3.90.79.10:FF:000012">
    <property type="entry name" value="Isopentenyl-diphosphate Delta-isomerase 1"/>
    <property type="match status" value="1"/>
</dbReference>
<dbReference type="Gene3D" id="3.90.79.10">
    <property type="entry name" value="Nucleoside Triphosphate Pyrophosphohydrolase"/>
    <property type="match status" value="1"/>
</dbReference>
<dbReference type="InterPro" id="IPR011876">
    <property type="entry name" value="IsopentenylPP_isomerase_typ1"/>
</dbReference>
<dbReference type="InterPro" id="IPR015797">
    <property type="entry name" value="NUDIX_hydrolase-like_dom_sf"/>
</dbReference>
<dbReference type="InterPro" id="IPR000086">
    <property type="entry name" value="NUDIX_hydrolase_dom"/>
</dbReference>
<dbReference type="NCBIfam" id="TIGR02150">
    <property type="entry name" value="IPP_isom_1"/>
    <property type="match status" value="1"/>
</dbReference>
<dbReference type="PANTHER" id="PTHR10885">
    <property type="entry name" value="ISOPENTENYL-DIPHOSPHATE DELTA-ISOMERASE"/>
    <property type="match status" value="1"/>
</dbReference>
<dbReference type="PANTHER" id="PTHR10885:SF5">
    <property type="entry name" value="ISOPENTENYL-DIPHOSPHATE DELTA-ISOMERASE 1"/>
    <property type="match status" value="1"/>
</dbReference>
<dbReference type="Pfam" id="PF00293">
    <property type="entry name" value="NUDIX"/>
    <property type="match status" value="1"/>
</dbReference>
<dbReference type="PIRSF" id="PIRSF018427">
    <property type="entry name" value="Isopntndiph_ism"/>
    <property type="match status" value="1"/>
</dbReference>
<dbReference type="SUPFAM" id="SSF55811">
    <property type="entry name" value="Nudix"/>
    <property type="match status" value="1"/>
</dbReference>
<dbReference type="PROSITE" id="PS51462">
    <property type="entry name" value="NUDIX"/>
    <property type="match status" value="1"/>
</dbReference>
<evidence type="ECO:0000250" key="1"/>
<evidence type="ECO:0000250" key="2">
    <source>
        <dbReference type="UniProtKB" id="O35586"/>
    </source>
</evidence>
<evidence type="ECO:0000250" key="3">
    <source>
        <dbReference type="UniProtKB" id="Q13907"/>
    </source>
</evidence>
<evidence type="ECO:0000255" key="4">
    <source>
        <dbReference type="PROSITE-ProRule" id="PRU00794"/>
    </source>
</evidence>
<evidence type="ECO:0000305" key="5"/>
<protein>
    <recommendedName>
        <fullName>Isopentenyl-diphosphate Delta-isomerase 1</fullName>
        <ecNumber evidence="3">5.3.3.2</ecNumber>
    </recommendedName>
    <alternativeName>
        <fullName>Isopentenyl pyrophosphate isomerase 1</fullName>
        <shortName>IPP isomerase 1</shortName>
        <shortName>IPPI1</shortName>
    </alternativeName>
</protein>
<proteinExistence type="evidence at transcript level"/>
<keyword id="KW-0007">Acetylation</keyword>
<keyword id="KW-0152">Cholesterol biosynthesis</keyword>
<keyword id="KW-0153">Cholesterol metabolism</keyword>
<keyword id="KW-0413">Isomerase</keyword>
<keyword id="KW-0414">Isoprene biosynthesis</keyword>
<keyword id="KW-0444">Lipid biosynthesis</keyword>
<keyword id="KW-0443">Lipid metabolism</keyword>
<keyword id="KW-0460">Magnesium</keyword>
<keyword id="KW-0479">Metal-binding</keyword>
<keyword id="KW-0576">Peroxisome</keyword>
<keyword id="KW-1185">Reference proteome</keyword>
<keyword id="KW-0752">Steroid biosynthesis</keyword>
<keyword id="KW-0753">Steroid metabolism</keyword>
<keyword id="KW-0756">Sterol biosynthesis</keyword>
<keyword id="KW-1207">Sterol metabolism</keyword>
<comment type="function">
    <text evidence="3">Catalyzes the 1,3-allylic rearrangement of the homoallylic substrate isopentenyl (IPP) to its highly electrophilic allylic isomer, dimethylallyl diphosphate (DMAPP).</text>
</comment>
<comment type="catalytic activity">
    <reaction evidence="3">
        <text>isopentenyl diphosphate = dimethylallyl diphosphate</text>
        <dbReference type="Rhea" id="RHEA:23284"/>
        <dbReference type="ChEBI" id="CHEBI:57623"/>
        <dbReference type="ChEBI" id="CHEBI:128769"/>
        <dbReference type="EC" id="5.3.3.2"/>
    </reaction>
</comment>
<comment type="cofactor">
    <cofactor evidence="3">
        <name>Mg(2+)</name>
        <dbReference type="ChEBI" id="CHEBI:18420"/>
    </cofactor>
    <text evidence="3">Binds 1 Mg(2+) ion per subunit.</text>
</comment>
<comment type="pathway">
    <text evidence="3">Isoprenoid biosynthesis; dimethylallyl diphosphate biosynthesis; dimethylallyl diphosphate from isopentenyl diphosphate: step 1/1.</text>
</comment>
<comment type="subunit">
    <text evidence="3">Monomer.</text>
</comment>
<comment type="subcellular location">
    <subcellularLocation>
        <location evidence="2">Peroxisome</location>
    </subcellularLocation>
</comment>
<comment type="similarity">
    <text evidence="5">Belongs to the IPP isomerase type 1 family.</text>
</comment>
<comment type="sequence caution" evidence="5">
    <conflict type="erroneous initiation">
        <sequence resource="EMBL-CDS" id="CAH91844"/>
    </conflict>
</comment>
<accession>Q5R8R6</accession>